<organism>
    <name type="scientific">Mus musculus</name>
    <name type="common">Mouse</name>
    <dbReference type="NCBI Taxonomy" id="10090"/>
    <lineage>
        <taxon>Eukaryota</taxon>
        <taxon>Metazoa</taxon>
        <taxon>Chordata</taxon>
        <taxon>Craniata</taxon>
        <taxon>Vertebrata</taxon>
        <taxon>Euteleostomi</taxon>
        <taxon>Mammalia</taxon>
        <taxon>Eutheria</taxon>
        <taxon>Euarchontoglires</taxon>
        <taxon>Glires</taxon>
        <taxon>Rodentia</taxon>
        <taxon>Myomorpha</taxon>
        <taxon>Muroidea</taxon>
        <taxon>Muridae</taxon>
        <taxon>Murinae</taxon>
        <taxon>Mus</taxon>
        <taxon>Mus</taxon>
    </lineage>
</organism>
<accession>Q3URE9</accession>
<accession>Q8BLC0</accession>
<accession>Q8BZD4</accession>
<feature type="signal peptide" evidence="1">
    <location>
        <begin position="1"/>
        <end position="27"/>
    </location>
</feature>
<feature type="chain" id="PRO_0000324390" description="Leucine-rich repeat and immunoglobulin-like domain-containing nogo receptor-interacting protein 2">
    <location>
        <begin position="28"/>
        <end position="606"/>
    </location>
</feature>
<feature type="topological domain" description="Extracellular" evidence="1">
    <location>
        <begin position="28"/>
        <end position="545"/>
    </location>
</feature>
<feature type="transmembrane region" description="Helical" evidence="1">
    <location>
        <begin position="546"/>
        <end position="566"/>
    </location>
</feature>
<feature type="topological domain" description="Cytoplasmic" evidence="1">
    <location>
        <begin position="567"/>
        <end position="606"/>
    </location>
</feature>
<feature type="domain" description="LRRNT">
    <location>
        <begin position="28"/>
        <end position="57"/>
    </location>
</feature>
<feature type="repeat" description="LRR 1">
    <location>
        <begin position="58"/>
        <end position="79"/>
    </location>
</feature>
<feature type="repeat" description="LRR 2">
    <location>
        <begin position="82"/>
        <end position="103"/>
    </location>
</feature>
<feature type="repeat" description="LRR 3">
    <location>
        <begin position="106"/>
        <end position="127"/>
    </location>
</feature>
<feature type="repeat" description="LRR 4">
    <location>
        <begin position="130"/>
        <end position="151"/>
    </location>
</feature>
<feature type="repeat" description="LRR 5">
    <location>
        <begin position="154"/>
        <end position="175"/>
    </location>
</feature>
<feature type="repeat" description="LRR 6">
    <location>
        <begin position="178"/>
        <end position="199"/>
    </location>
</feature>
<feature type="repeat" description="LRR 7">
    <location>
        <begin position="202"/>
        <end position="223"/>
    </location>
</feature>
<feature type="repeat" description="LRR 8">
    <location>
        <begin position="226"/>
        <end position="247"/>
    </location>
</feature>
<feature type="repeat" description="LRR 9">
    <location>
        <begin position="250"/>
        <end position="271"/>
    </location>
</feature>
<feature type="repeat" description="LRR 10">
    <location>
        <begin position="274"/>
        <end position="295"/>
    </location>
</feature>
<feature type="repeat" description="LRR 11">
    <location>
        <begin position="298"/>
        <end position="319"/>
    </location>
</feature>
<feature type="repeat" description="LRR 12">
    <location>
        <begin position="322"/>
        <end position="343"/>
    </location>
</feature>
<feature type="domain" description="LRRCT">
    <location>
        <begin position="355"/>
        <end position="409"/>
    </location>
</feature>
<feature type="glycosylation site" description="N-linked (GlcNAc...) asparagine" evidence="1">
    <location>
        <position position="38"/>
    </location>
</feature>
<feature type="glycosylation site" description="N-linked (GlcNAc...) asparagine" evidence="1">
    <location>
        <position position="130"/>
    </location>
</feature>
<feature type="glycosylation site" description="N-linked (GlcNAc...) asparagine" evidence="1">
    <location>
        <position position="188"/>
    </location>
</feature>
<feature type="glycosylation site" description="N-linked (GlcNAc...) asparagine" evidence="1">
    <location>
        <position position="250"/>
    </location>
</feature>
<feature type="glycosylation site" description="N-linked (GlcNAc...) asparagine" evidence="1">
    <location>
        <position position="260"/>
    </location>
</feature>
<feature type="glycosylation site" description="N-linked (GlcNAc...) asparagine" evidence="1">
    <location>
        <position position="279"/>
    </location>
</feature>
<feature type="glycosylation site" description="N-linked (GlcNAc...) asparagine" evidence="1">
    <location>
        <position position="327"/>
    </location>
</feature>
<feature type="glycosylation site" description="N-linked (GlcNAc...) asparagine" evidence="1">
    <location>
        <position position="491"/>
    </location>
</feature>
<feature type="glycosylation site" description="N-linked (GlcNAc...) asparagine" evidence="1">
    <location>
        <position position="522"/>
    </location>
</feature>
<feature type="glycosylation site" description="N-linked (GlcNAc...) asparagine" evidence="1">
    <location>
        <position position="527"/>
    </location>
</feature>
<feature type="disulfide bond" evidence="2">
    <location>
        <begin position="432"/>
        <end position="483"/>
    </location>
</feature>
<feature type="sequence conflict" description="In Ref. 1; BAC32442." evidence="3" ref="1">
    <original>D</original>
    <variation>G</variation>
    <location>
        <position position="537"/>
    </location>
</feature>
<feature type="sequence conflict" description="In Ref. 1; BAC29183." evidence="3" ref="1">
    <original>F</original>
    <variation>Y</variation>
    <location>
        <position position="550"/>
    </location>
</feature>
<sequence>MLHTAIPCWQPFLGLAVVLLLMGSTIGCPARCECSAQNKSVSCHRRRLLAIPEGIPIETKILDLSKNRLKSINPEEFISYPLLEEIDLSDNIIANVEPGAFNNLFNLRSLRLKGNRLKLVPLGVFTGLSNLTKLDISENKIVILLDYMFQDLHNLKSLEVGDNDLVYISHRAFSGLLSLEQLTLEKCNLTAVPTEALSHLRSLIALHLKHLNINNMPVYAFKRLFHLKNLEIDYWPLLDLMPANSLYGLNLTSLSITNTNLSTVPFLAFKHLVYLTHLNLSYNPISTIEAGMFSDLIRLQELHIVGAQLRTIEPHSFQGLRFLRVLNVSQNLLETLEENVFSSPRALEVLSINNNPLACDCRLLWLLQRQPNLQFGGQQPMCAGPDTIRERSFKDFHSTALSFYFTCKKPKIREKKLQHLLVDEGQTVQLECNADGDPQPVISWVTPRRRFITTKSNGRATVLGDGTLEIRFAQDQDSGMYVCIASNAAGNDTFTASLTVKGFTSDRFLYANRTPMYMTDSNDTVSNGTNANTFSLDLKTILVSTAMGCFTFLGVVLFCFLLLFVWSRGKGKHKNSIDLEYVPRKNNGAVVEGEVAGPRRFNMKMI</sequence>
<proteinExistence type="evidence at transcript level"/>
<keyword id="KW-1015">Disulfide bond</keyword>
<keyword id="KW-0325">Glycoprotein</keyword>
<keyword id="KW-0393">Immunoglobulin domain</keyword>
<keyword id="KW-0433">Leucine-rich repeat</keyword>
<keyword id="KW-0472">Membrane</keyword>
<keyword id="KW-1185">Reference proteome</keyword>
<keyword id="KW-0677">Repeat</keyword>
<keyword id="KW-0732">Signal</keyword>
<keyword id="KW-0812">Transmembrane</keyword>
<keyword id="KW-1133">Transmembrane helix</keyword>
<reference key="1">
    <citation type="journal article" date="2005" name="Science">
        <title>The transcriptional landscape of the mammalian genome.</title>
        <authorList>
            <person name="Carninci P."/>
            <person name="Kasukawa T."/>
            <person name="Katayama S."/>
            <person name="Gough J."/>
            <person name="Frith M.C."/>
            <person name="Maeda N."/>
            <person name="Oyama R."/>
            <person name="Ravasi T."/>
            <person name="Lenhard B."/>
            <person name="Wells C."/>
            <person name="Kodzius R."/>
            <person name="Shimokawa K."/>
            <person name="Bajic V.B."/>
            <person name="Brenner S.E."/>
            <person name="Batalov S."/>
            <person name="Forrest A.R."/>
            <person name="Zavolan M."/>
            <person name="Davis M.J."/>
            <person name="Wilming L.G."/>
            <person name="Aidinis V."/>
            <person name="Allen J.E."/>
            <person name="Ambesi-Impiombato A."/>
            <person name="Apweiler R."/>
            <person name="Aturaliya R.N."/>
            <person name="Bailey T.L."/>
            <person name="Bansal M."/>
            <person name="Baxter L."/>
            <person name="Beisel K.W."/>
            <person name="Bersano T."/>
            <person name="Bono H."/>
            <person name="Chalk A.M."/>
            <person name="Chiu K.P."/>
            <person name="Choudhary V."/>
            <person name="Christoffels A."/>
            <person name="Clutterbuck D.R."/>
            <person name="Crowe M.L."/>
            <person name="Dalla E."/>
            <person name="Dalrymple B.P."/>
            <person name="de Bono B."/>
            <person name="Della Gatta G."/>
            <person name="di Bernardo D."/>
            <person name="Down T."/>
            <person name="Engstrom P."/>
            <person name="Fagiolini M."/>
            <person name="Faulkner G."/>
            <person name="Fletcher C.F."/>
            <person name="Fukushima T."/>
            <person name="Furuno M."/>
            <person name="Futaki S."/>
            <person name="Gariboldi M."/>
            <person name="Georgii-Hemming P."/>
            <person name="Gingeras T.R."/>
            <person name="Gojobori T."/>
            <person name="Green R.E."/>
            <person name="Gustincich S."/>
            <person name="Harbers M."/>
            <person name="Hayashi Y."/>
            <person name="Hensch T.K."/>
            <person name="Hirokawa N."/>
            <person name="Hill D."/>
            <person name="Huminiecki L."/>
            <person name="Iacono M."/>
            <person name="Ikeo K."/>
            <person name="Iwama A."/>
            <person name="Ishikawa T."/>
            <person name="Jakt M."/>
            <person name="Kanapin A."/>
            <person name="Katoh M."/>
            <person name="Kawasawa Y."/>
            <person name="Kelso J."/>
            <person name="Kitamura H."/>
            <person name="Kitano H."/>
            <person name="Kollias G."/>
            <person name="Krishnan S.P."/>
            <person name="Kruger A."/>
            <person name="Kummerfeld S.K."/>
            <person name="Kurochkin I.V."/>
            <person name="Lareau L.F."/>
            <person name="Lazarevic D."/>
            <person name="Lipovich L."/>
            <person name="Liu J."/>
            <person name="Liuni S."/>
            <person name="McWilliam S."/>
            <person name="Madan Babu M."/>
            <person name="Madera M."/>
            <person name="Marchionni L."/>
            <person name="Matsuda H."/>
            <person name="Matsuzawa S."/>
            <person name="Miki H."/>
            <person name="Mignone F."/>
            <person name="Miyake S."/>
            <person name="Morris K."/>
            <person name="Mottagui-Tabar S."/>
            <person name="Mulder N."/>
            <person name="Nakano N."/>
            <person name="Nakauchi H."/>
            <person name="Ng P."/>
            <person name="Nilsson R."/>
            <person name="Nishiguchi S."/>
            <person name="Nishikawa S."/>
            <person name="Nori F."/>
            <person name="Ohara O."/>
            <person name="Okazaki Y."/>
            <person name="Orlando V."/>
            <person name="Pang K.C."/>
            <person name="Pavan W.J."/>
            <person name="Pavesi G."/>
            <person name="Pesole G."/>
            <person name="Petrovsky N."/>
            <person name="Piazza S."/>
            <person name="Reed J."/>
            <person name="Reid J.F."/>
            <person name="Ring B.Z."/>
            <person name="Ringwald M."/>
            <person name="Rost B."/>
            <person name="Ruan Y."/>
            <person name="Salzberg S.L."/>
            <person name="Sandelin A."/>
            <person name="Schneider C."/>
            <person name="Schoenbach C."/>
            <person name="Sekiguchi K."/>
            <person name="Semple C.A."/>
            <person name="Seno S."/>
            <person name="Sessa L."/>
            <person name="Sheng Y."/>
            <person name="Shibata Y."/>
            <person name="Shimada H."/>
            <person name="Shimada K."/>
            <person name="Silva D."/>
            <person name="Sinclair B."/>
            <person name="Sperling S."/>
            <person name="Stupka E."/>
            <person name="Sugiura K."/>
            <person name="Sultana R."/>
            <person name="Takenaka Y."/>
            <person name="Taki K."/>
            <person name="Tammoja K."/>
            <person name="Tan S.L."/>
            <person name="Tang S."/>
            <person name="Taylor M.S."/>
            <person name="Tegner J."/>
            <person name="Teichmann S.A."/>
            <person name="Ueda H.R."/>
            <person name="van Nimwegen E."/>
            <person name="Verardo R."/>
            <person name="Wei C.L."/>
            <person name="Yagi K."/>
            <person name="Yamanishi H."/>
            <person name="Zabarovsky E."/>
            <person name="Zhu S."/>
            <person name="Zimmer A."/>
            <person name="Hide W."/>
            <person name="Bult C."/>
            <person name="Grimmond S.M."/>
            <person name="Teasdale R.D."/>
            <person name="Liu E.T."/>
            <person name="Brusic V."/>
            <person name="Quackenbush J."/>
            <person name="Wahlestedt C."/>
            <person name="Mattick J.S."/>
            <person name="Hume D.A."/>
            <person name="Kai C."/>
            <person name="Sasaki D."/>
            <person name="Tomaru Y."/>
            <person name="Fukuda S."/>
            <person name="Kanamori-Katayama M."/>
            <person name="Suzuki M."/>
            <person name="Aoki J."/>
            <person name="Arakawa T."/>
            <person name="Iida J."/>
            <person name="Imamura K."/>
            <person name="Itoh M."/>
            <person name="Kato T."/>
            <person name="Kawaji H."/>
            <person name="Kawagashira N."/>
            <person name="Kawashima T."/>
            <person name="Kojima M."/>
            <person name="Kondo S."/>
            <person name="Konno H."/>
            <person name="Nakano K."/>
            <person name="Ninomiya N."/>
            <person name="Nishio T."/>
            <person name="Okada M."/>
            <person name="Plessy C."/>
            <person name="Shibata K."/>
            <person name="Shiraki T."/>
            <person name="Suzuki S."/>
            <person name="Tagami M."/>
            <person name="Waki K."/>
            <person name="Watahiki A."/>
            <person name="Okamura-Oho Y."/>
            <person name="Suzuki H."/>
            <person name="Kawai J."/>
            <person name="Hayashizaki Y."/>
        </authorList>
    </citation>
    <scope>NUCLEOTIDE SEQUENCE [LARGE SCALE MRNA]</scope>
    <source>
        <strain>C57BL/6J</strain>
        <tissue>Corpora quadrigemina</tissue>
        <tissue>Hippocampus</tissue>
    </source>
</reference>
<reference key="2">
    <citation type="journal article" date="2004" name="Genome Res.">
        <title>The status, quality, and expansion of the NIH full-length cDNA project: the Mammalian Gene Collection (MGC).</title>
        <authorList>
            <consortium name="The MGC Project Team"/>
        </authorList>
    </citation>
    <scope>NUCLEOTIDE SEQUENCE [LARGE SCALE MRNA]</scope>
    <source>
        <strain>C57BL/6J</strain>
        <tissue>Brain</tissue>
    </source>
</reference>
<name>LIGO2_MOUSE</name>
<comment type="subcellular location">
    <subcellularLocation>
        <location evidence="3">Membrane</location>
        <topology evidence="3">Single-pass type I membrane protein</topology>
    </subcellularLocation>
</comment>
<protein>
    <recommendedName>
        <fullName>Leucine-rich repeat and immunoglobulin-like domain-containing nogo receptor-interacting protein 2</fullName>
    </recommendedName>
    <alternativeName>
        <fullName>Leucine-rich repeat neuronal protein 6C</fullName>
    </alternativeName>
</protein>
<gene>
    <name type="primary">Lingo2</name>
    <name type="synonym">Lrrn6c</name>
</gene>
<evidence type="ECO:0000255" key="1"/>
<evidence type="ECO:0000255" key="2">
    <source>
        <dbReference type="PROSITE-ProRule" id="PRU00114"/>
    </source>
</evidence>
<evidence type="ECO:0000305" key="3"/>
<dbReference type="EMBL" id="AK035778">
    <property type="protein sequence ID" value="BAC29183.1"/>
    <property type="molecule type" value="mRNA"/>
</dbReference>
<dbReference type="EMBL" id="AK045639">
    <property type="protein sequence ID" value="BAC32442.1"/>
    <property type="molecule type" value="mRNA"/>
</dbReference>
<dbReference type="EMBL" id="AK141568">
    <property type="protein sequence ID" value="BAE24739.1"/>
    <property type="molecule type" value="mRNA"/>
</dbReference>
<dbReference type="EMBL" id="BC090619">
    <property type="protein sequence ID" value="AAH90619.1"/>
    <property type="molecule type" value="mRNA"/>
</dbReference>
<dbReference type="EMBL" id="BC145692">
    <property type="protein sequence ID" value="AAI45693.1"/>
    <property type="molecule type" value="mRNA"/>
</dbReference>
<dbReference type="CCDS" id="CCDS18040.1"/>
<dbReference type="RefSeq" id="NP_001159471.1">
    <property type="nucleotide sequence ID" value="NM_001165999.1"/>
</dbReference>
<dbReference type="RefSeq" id="NP_001159472.1">
    <property type="nucleotide sequence ID" value="NM_001166000.1"/>
</dbReference>
<dbReference type="RefSeq" id="NP_001159473.1">
    <property type="nucleotide sequence ID" value="NM_001166001.1"/>
</dbReference>
<dbReference type="RefSeq" id="NP_780725.2">
    <property type="nucleotide sequence ID" value="NM_175516.4"/>
</dbReference>
<dbReference type="RefSeq" id="XP_006537965.1">
    <property type="nucleotide sequence ID" value="XM_006537902.2"/>
</dbReference>
<dbReference type="RefSeq" id="XP_006537966.1">
    <property type="nucleotide sequence ID" value="XM_006537903.4"/>
</dbReference>
<dbReference type="RefSeq" id="XP_006537967.1">
    <property type="nucleotide sequence ID" value="XM_006537904.5"/>
</dbReference>
<dbReference type="RefSeq" id="XP_011248319.1">
    <property type="nucleotide sequence ID" value="XM_011250017.4"/>
</dbReference>
<dbReference type="RefSeq" id="XP_011248320.1">
    <property type="nucleotide sequence ID" value="XM_011250018.4"/>
</dbReference>
<dbReference type="RefSeq" id="XP_011248321.1">
    <property type="nucleotide sequence ID" value="XM_011250019.4"/>
</dbReference>
<dbReference type="RefSeq" id="XP_011248322.1">
    <property type="nucleotide sequence ID" value="XM_011250020.4"/>
</dbReference>
<dbReference type="RefSeq" id="XP_011248324.1">
    <property type="nucleotide sequence ID" value="XM_011250022.2"/>
</dbReference>
<dbReference type="RefSeq" id="XP_011248325.1">
    <property type="nucleotide sequence ID" value="XM_011250023.4"/>
</dbReference>
<dbReference type="RefSeq" id="XP_011248327.1">
    <property type="nucleotide sequence ID" value="XM_011250025.2"/>
</dbReference>
<dbReference type="RefSeq" id="XP_011248328.1">
    <property type="nucleotide sequence ID" value="XM_011250026.2"/>
</dbReference>
<dbReference type="RefSeq" id="XP_017175684.1">
    <property type="nucleotide sequence ID" value="XM_017320195.1"/>
</dbReference>
<dbReference type="RefSeq" id="XP_017175685.1">
    <property type="nucleotide sequence ID" value="XM_017320196.1"/>
</dbReference>
<dbReference type="RefSeq" id="XP_017175686.1">
    <property type="nucleotide sequence ID" value="XM_017320197.1"/>
</dbReference>
<dbReference type="RefSeq" id="XP_017175687.1">
    <property type="nucleotide sequence ID" value="XM_017320198.2"/>
</dbReference>
<dbReference type="RefSeq" id="XP_030109387.1">
    <property type="nucleotide sequence ID" value="XM_030253527.2"/>
</dbReference>
<dbReference type="RefSeq" id="XP_030109388.1">
    <property type="nucleotide sequence ID" value="XM_030253528.2"/>
</dbReference>
<dbReference type="RefSeq" id="XP_036019990.1">
    <property type="nucleotide sequence ID" value="XM_036164097.1"/>
</dbReference>
<dbReference type="RefSeq" id="XP_036019991.1">
    <property type="nucleotide sequence ID" value="XM_036164098.1"/>
</dbReference>
<dbReference type="RefSeq" id="XP_036019992.1">
    <property type="nucleotide sequence ID" value="XM_036164099.1"/>
</dbReference>
<dbReference type="RefSeq" id="XP_036019993.1">
    <property type="nucleotide sequence ID" value="XM_036164100.1"/>
</dbReference>
<dbReference type="RefSeq" id="XP_036019994.1">
    <property type="nucleotide sequence ID" value="XM_036164101.1"/>
</dbReference>
<dbReference type="RefSeq" id="XP_036019995.1">
    <property type="nucleotide sequence ID" value="XM_036164102.1"/>
</dbReference>
<dbReference type="RefSeq" id="XP_036019996.1">
    <property type="nucleotide sequence ID" value="XM_036164103.1"/>
</dbReference>
<dbReference type="RefSeq" id="XP_036019997.1">
    <property type="nucleotide sequence ID" value="XM_036164104.1"/>
</dbReference>
<dbReference type="RefSeq" id="XP_036019998.1">
    <property type="nucleotide sequence ID" value="XM_036164105.1"/>
</dbReference>
<dbReference type="RefSeq" id="XP_036019999.1">
    <property type="nucleotide sequence ID" value="XM_036164106.1"/>
</dbReference>
<dbReference type="RefSeq" id="XP_036020000.1">
    <property type="nucleotide sequence ID" value="XM_036164107.1"/>
</dbReference>
<dbReference type="RefSeq" id="XP_036020001.1">
    <property type="nucleotide sequence ID" value="XM_036164108.1"/>
</dbReference>
<dbReference type="SMR" id="Q3URE9"/>
<dbReference type="BioGRID" id="232398">
    <property type="interactions" value="1"/>
</dbReference>
<dbReference type="FunCoup" id="Q3URE9">
    <property type="interactions" value="181"/>
</dbReference>
<dbReference type="STRING" id="10090.ENSMUSP00000130423"/>
<dbReference type="GlyConnect" id="2466">
    <property type="glycosylation" value="1 N-Linked glycan (1 site)"/>
</dbReference>
<dbReference type="GlyCosmos" id="Q3URE9">
    <property type="glycosylation" value="10 sites, 1 glycan"/>
</dbReference>
<dbReference type="GlyGen" id="Q3URE9">
    <property type="glycosylation" value="11 sites, 5 N-linked glycans (4 sites), 1 O-linked glycan (1 site)"/>
</dbReference>
<dbReference type="iPTMnet" id="Q3URE9"/>
<dbReference type="PhosphoSitePlus" id="Q3URE9"/>
<dbReference type="PaxDb" id="10090-ENSMUSP00000069772"/>
<dbReference type="ProteomicsDB" id="292253"/>
<dbReference type="ABCD" id="Q3URE9">
    <property type="antibodies" value="9 sequenced antibodies"/>
</dbReference>
<dbReference type="Antibodypedia" id="3035">
    <property type="antibodies" value="147 antibodies from 23 providers"/>
</dbReference>
<dbReference type="DNASU" id="242384"/>
<dbReference type="Ensembl" id="ENSMUST00000065173.9">
    <property type="protein sequence ID" value="ENSMUSP00000069772.3"/>
    <property type="gene ID" value="ENSMUSG00000045083.15"/>
</dbReference>
<dbReference type="Ensembl" id="ENSMUST00000098151.9">
    <property type="protein sequence ID" value="ENSMUSP00000095754.3"/>
    <property type="gene ID" value="ENSMUSG00000045083.15"/>
</dbReference>
<dbReference type="Ensembl" id="ENSMUST00000108122.8">
    <property type="protein sequence ID" value="ENSMUSP00000103757.2"/>
    <property type="gene ID" value="ENSMUSG00000045083.15"/>
</dbReference>
<dbReference type="Ensembl" id="ENSMUST00000108124.4">
    <property type="protein sequence ID" value="ENSMUSP00000103759.4"/>
    <property type="gene ID" value="ENSMUSG00000045083.15"/>
</dbReference>
<dbReference type="Ensembl" id="ENSMUST00000164772.8">
    <property type="protein sequence ID" value="ENSMUSP00000130423.2"/>
    <property type="gene ID" value="ENSMUSG00000045083.15"/>
</dbReference>
<dbReference type="GeneID" id="242384"/>
<dbReference type="KEGG" id="mmu:242384"/>
<dbReference type="UCSC" id="uc008sgz.2">
    <property type="organism name" value="mouse"/>
</dbReference>
<dbReference type="AGR" id="MGI:2442298"/>
<dbReference type="CTD" id="158038"/>
<dbReference type="MGI" id="MGI:2442298">
    <property type="gene designation" value="Lingo2"/>
</dbReference>
<dbReference type="VEuPathDB" id="HostDB:ENSMUSG00000045083"/>
<dbReference type="eggNOG" id="KOG0619">
    <property type="taxonomic scope" value="Eukaryota"/>
</dbReference>
<dbReference type="GeneTree" id="ENSGT00940000156665"/>
<dbReference type="HOGENOM" id="CLU_000288_18_24_1"/>
<dbReference type="InParanoid" id="Q3URE9"/>
<dbReference type="OMA" id="TKAVVCH"/>
<dbReference type="OrthoDB" id="10061535at2759"/>
<dbReference type="PhylomeDB" id="Q3URE9"/>
<dbReference type="TreeFam" id="TF334360"/>
<dbReference type="BioGRID-ORCS" id="242384">
    <property type="hits" value="2 hits in 76 CRISPR screens"/>
</dbReference>
<dbReference type="ChiTaRS" id="Lingo2">
    <property type="organism name" value="mouse"/>
</dbReference>
<dbReference type="PRO" id="PR:Q3URE9"/>
<dbReference type="Proteomes" id="UP000000589">
    <property type="component" value="Chromosome 4"/>
</dbReference>
<dbReference type="RNAct" id="Q3URE9">
    <property type="molecule type" value="protein"/>
</dbReference>
<dbReference type="Bgee" id="ENSMUSG00000045083">
    <property type="expression patterns" value="Expressed in animal zygote and 65 other cell types or tissues"/>
</dbReference>
<dbReference type="ExpressionAtlas" id="Q3URE9">
    <property type="expression patterns" value="baseline and differential"/>
</dbReference>
<dbReference type="GO" id="GO:0098978">
    <property type="term" value="C:glutamatergic synapse"/>
    <property type="evidence" value="ECO:0007669"/>
    <property type="project" value="Ensembl"/>
</dbReference>
<dbReference type="GO" id="GO:0097060">
    <property type="term" value="C:synaptic membrane"/>
    <property type="evidence" value="ECO:0007669"/>
    <property type="project" value="Ensembl"/>
</dbReference>
<dbReference type="GO" id="GO:0051965">
    <property type="term" value="P:positive regulation of synapse assembly"/>
    <property type="evidence" value="ECO:0000314"/>
    <property type="project" value="MGI"/>
</dbReference>
<dbReference type="FunFam" id="2.60.40.10:FF:000076">
    <property type="entry name" value="Leucine-rich repeat and Ig domain-containing 4"/>
    <property type="match status" value="1"/>
</dbReference>
<dbReference type="FunFam" id="3.80.10.10:FF:000014">
    <property type="entry name" value="Leucine-rich repeat and immunoglobulin-like domain-containing nogo receptor-interacting protein 1"/>
    <property type="match status" value="1"/>
</dbReference>
<dbReference type="Gene3D" id="2.60.40.10">
    <property type="entry name" value="Immunoglobulins"/>
    <property type="match status" value="1"/>
</dbReference>
<dbReference type="Gene3D" id="3.80.10.10">
    <property type="entry name" value="Ribonuclease Inhibitor"/>
    <property type="match status" value="1"/>
</dbReference>
<dbReference type="InterPro" id="IPR007110">
    <property type="entry name" value="Ig-like_dom"/>
</dbReference>
<dbReference type="InterPro" id="IPR036179">
    <property type="entry name" value="Ig-like_dom_sf"/>
</dbReference>
<dbReference type="InterPro" id="IPR013783">
    <property type="entry name" value="Ig-like_fold"/>
</dbReference>
<dbReference type="InterPro" id="IPR013098">
    <property type="entry name" value="Ig_I-set"/>
</dbReference>
<dbReference type="InterPro" id="IPR003599">
    <property type="entry name" value="Ig_sub"/>
</dbReference>
<dbReference type="InterPro" id="IPR003598">
    <property type="entry name" value="Ig_sub2"/>
</dbReference>
<dbReference type="InterPro" id="IPR001611">
    <property type="entry name" value="Leu-rich_rpt"/>
</dbReference>
<dbReference type="InterPro" id="IPR003591">
    <property type="entry name" value="Leu-rich_rpt_typical-subtyp"/>
</dbReference>
<dbReference type="InterPro" id="IPR032675">
    <property type="entry name" value="LRR_dom_sf"/>
</dbReference>
<dbReference type="InterPro" id="IPR050541">
    <property type="entry name" value="LRR_TM_domain-containing"/>
</dbReference>
<dbReference type="InterPro" id="IPR000372">
    <property type="entry name" value="LRRNT"/>
</dbReference>
<dbReference type="PANTHER" id="PTHR24369">
    <property type="entry name" value="ANTIGEN BSP, PUTATIVE-RELATED"/>
    <property type="match status" value="1"/>
</dbReference>
<dbReference type="PANTHER" id="PTHR24369:SF156">
    <property type="entry name" value="LEUCINE RICH REPEAT AND IG DOMAIN CONTAINING 2"/>
    <property type="match status" value="1"/>
</dbReference>
<dbReference type="Pfam" id="PF07679">
    <property type="entry name" value="I-set"/>
    <property type="match status" value="1"/>
</dbReference>
<dbReference type="Pfam" id="PF13855">
    <property type="entry name" value="LRR_8"/>
    <property type="match status" value="2"/>
</dbReference>
<dbReference type="SMART" id="SM00409">
    <property type="entry name" value="IG"/>
    <property type="match status" value="1"/>
</dbReference>
<dbReference type="SMART" id="SM00408">
    <property type="entry name" value="IGc2"/>
    <property type="match status" value="1"/>
</dbReference>
<dbReference type="SMART" id="SM00369">
    <property type="entry name" value="LRR_TYP"/>
    <property type="match status" value="9"/>
</dbReference>
<dbReference type="SMART" id="SM00013">
    <property type="entry name" value="LRRNT"/>
    <property type="match status" value="1"/>
</dbReference>
<dbReference type="SUPFAM" id="SSF48726">
    <property type="entry name" value="Immunoglobulin"/>
    <property type="match status" value="1"/>
</dbReference>
<dbReference type="SUPFAM" id="SSF52058">
    <property type="entry name" value="L domain-like"/>
    <property type="match status" value="1"/>
</dbReference>
<dbReference type="PROSITE" id="PS50835">
    <property type="entry name" value="IG_LIKE"/>
    <property type="match status" value="1"/>
</dbReference>
<dbReference type="PROSITE" id="PS51450">
    <property type="entry name" value="LRR"/>
    <property type="match status" value="11"/>
</dbReference>